<keyword id="KW-0963">Cytoplasm</keyword>
<keyword id="KW-0378">Hydrolase</keyword>
<keyword id="KW-0645">Protease</keyword>
<keyword id="KW-1185">Reference proteome</keyword>
<accession>Q9M0A5</accession>
<accession>Q8LBZ3</accession>
<accession>Q8VZH8</accession>
<feature type="chain" id="PRO_0000435502" description="Gamma-glutamyl peptidase 3">
    <location>
        <begin position="1"/>
        <end position="249"/>
    </location>
</feature>
<feature type="domain" description="Glutamine amidotransferase type-1" evidence="1">
    <location>
        <begin position="19"/>
        <end position="217"/>
    </location>
</feature>
<feature type="active site" description="Nucleophile" evidence="1">
    <location>
        <position position="103"/>
    </location>
</feature>
<feature type="active site" evidence="1">
    <location>
        <position position="196"/>
    </location>
</feature>
<feature type="active site" evidence="1">
    <location>
        <position position="198"/>
    </location>
</feature>
<feature type="sequence conflict" description="In Ref. 4; AAM63954." evidence="4" ref="4">
    <original>W</original>
    <variation>S</variation>
    <location>
        <position position="44"/>
    </location>
</feature>
<feature type="sequence conflict" description="In Ref. 3; AAL36065/AAN28770." evidence="4" ref="3">
    <original>S</original>
    <variation>Y</variation>
    <location>
        <position position="152"/>
    </location>
</feature>
<dbReference type="EC" id="3.4.19.16" evidence="2"/>
<dbReference type="EMBL" id="AL161577">
    <property type="protein sequence ID" value="CAB79773.1"/>
    <property type="molecule type" value="Genomic_DNA"/>
</dbReference>
<dbReference type="EMBL" id="CP002687">
    <property type="protein sequence ID" value="AEE85779.1"/>
    <property type="molecule type" value="Genomic_DNA"/>
</dbReference>
<dbReference type="EMBL" id="AY064159">
    <property type="protein sequence ID" value="AAL36065.1"/>
    <property type="molecule type" value="mRNA"/>
</dbReference>
<dbReference type="EMBL" id="AY143831">
    <property type="protein sequence ID" value="AAN28770.1"/>
    <property type="molecule type" value="mRNA"/>
</dbReference>
<dbReference type="EMBL" id="AY086910">
    <property type="protein sequence ID" value="AAM63954.1"/>
    <property type="molecule type" value="mRNA"/>
</dbReference>
<dbReference type="PIR" id="D85357">
    <property type="entry name" value="D85357"/>
</dbReference>
<dbReference type="RefSeq" id="NP_194784.1">
    <property type="nucleotide sequence ID" value="NM_119201.3"/>
</dbReference>
<dbReference type="SMR" id="Q9M0A5"/>
<dbReference type="FunCoup" id="Q9M0A5">
    <property type="interactions" value="497"/>
</dbReference>
<dbReference type="STRING" id="3702.Q9M0A5"/>
<dbReference type="MEROPS" id="C26.A05"/>
<dbReference type="PaxDb" id="3702-AT4G30550.1"/>
<dbReference type="ProteomicsDB" id="221840"/>
<dbReference type="EnsemblPlants" id="AT4G30550.1">
    <property type="protein sequence ID" value="AT4G30550.1"/>
    <property type="gene ID" value="AT4G30550"/>
</dbReference>
<dbReference type="GeneID" id="829178"/>
<dbReference type="Gramene" id="AT4G30550.1">
    <property type="protein sequence ID" value="AT4G30550.1"/>
    <property type="gene ID" value="AT4G30550"/>
</dbReference>
<dbReference type="KEGG" id="ath:AT4G30550"/>
<dbReference type="Araport" id="AT4G30550"/>
<dbReference type="TAIR" id="AT4G30550">
    <property type="gene designation" value="GGP3"/>
</dbReference>
<dbReference type="eggNOG" id="KOG3179">
    <property type="taxonomic scope" value="Eukaryota"/>
</dbReference>
<dbReference type="HOGENOM" id="CLU_054974_0_1_1"/>
<dbReference type="InParanoid" id="Q9M0A5"/>
<dbReference type="OMA" id="CEVEMFS"/>
<dbReference type="OrthoDB" id="92161at2759"/>
<dbReference type="PhylomeDB" id="Q9M0A5"/>
<dbReference type="BioCyc" id="ARA:AT4G30550-MONOMER"/>
<dbReference type="BioCyc" id="MetaCyc:GQT-2803-MONOMER"/>
<dbReference type="BRENDA" id="3.4.19.16">
    <property type="organism ID" value="399"/>
</dbReference>
<dbReference type="PRO" id="PR:Q9M0A5"/>
<dbReference type="Proteomes" id="UP000006548">
    <property type="component" value="Chromosome 4"/>
</dbReference>
<dbReference type="ExpressionAtlas" id="Q9M0A5">
    <property type="expression patterns" value="baseline and differential"/>
</dbReference>
<dbReference type="GO" id="GO:0005829">
    <property type="term" value="C:cytosol"/>
    <property type="evidence" value="ECO:0000314"/>
    <property type="project" value="TAIR"/>
</dbReference>
<dbReference type="GO" id="GO:0008233">
    <property type="term" value="F:peptidase activity"/>
    <property type="evidence" value="ECO:0000314"/>
    <property type="project" value="TAIR"/>
</dbReference>
<dbReference type="GO" id="GO:0019760">
    <property type="term" value="P:glucosinolate metabolic process"/>
    <property type="evidence" value="ECO:0000315"/>
    <property type="project" value="TAIR"/>
</dbReference>
<dbReference type="GO" id="GO:0006508">
    <property type="term" value="P:proteolysis"/>
    <property type="evidence" value="ECO:0007669"/>
    <property type="project" value="UniProtKB-KW"/>
</dbReference>
<dbReference type="CDD" id="cd01741">
    <property type="entry name" value="GATase1_1"/>
    <property type="match status" value="1"/>
</dbReference>
<dbReference type="FunFam" id="3.40.50.880:FF:000040">
    <property type="entry name" value="Gamma-glutamyl peptidase 5"/>
    <property type="match status" value="1"/>
</dbReference>
<dbReference type="Gene3D" id="3.40.50.880">
    <property type="match status" value="1"/>
</dbReference>
<dbReference type="InterPro" id="IPR044992">
    <property type="entry name" value="ChyE-like"/>
</dbReference>
<dbReference type="InterPro" id="IPR029062">
    <property type="entry name" value="Class_I_gatase-like"/>
</dbReference>
<dbReference type="InterPro" id="IPR017926">
    <property type="entry name" value="GATASE"/>
</dbReference>
<dbReference type="PANTHER" id="PTHR42695:SF8">
    <property type="entry name" value="GAMMA-GLUTAMYL PEPTIDASE 3"/>
    <property type="match status" value="1"/>
</dbReference>
<dbReference type="PANTHER" id="PTHR42695">
    <property type="entry name" value="GLUTAMINE AMIDOTRANSFERASE YLR126C-RELATED"/>
    <property type="match status" value="1"/>
</dbReference>
<dbReference type="Pfam" id="PF00117">
    <property type="entry name" value="GATase"/>
    <property type="match status" value="1"/>
</dbReference>
<dbReference type="SUPFAM" id="SSF52317">
    <property type="entry name" value="Class I glutamine amidotransferase-like"/>
    <property type="match status" value="1"/>
</dbReference>
<dbReference type="PROSITE" id="PS51273">
    <property type="entry name" value="GATASE_TYPE_1"/>
    <property type="match status" value="1"/>
</dbReference>
<evidence type="ECO:0000255" key="1">
    <source>
        <dbReference type="PROSITE-ProRule" id="PRU00605"/>
    </source>
</evidence>
<evidence type="ECO:0000269" key="2">
    <source>
    </source>
</evidence>
<evidence type="ECO:0000303" key="3">
    <source>
    </source>
</evidence>
<evidence type="ECO:0000305" key="4"/>
<evidence type="ECO:0000312" key="5">
    <source>
        <dbReference type="Araport" id="AT4G30550"/>
    </source>
</evidence>
<protein>
    <recommendedName>
        <fullName evidence="4">Gamma-glutamyl peptidase 3</fullName>
        <ecNumber evidence="2">3.4.19.16</ecNumber>
    </recommendedName>
</protein>
<proteinExistence type="evidence at protein level"/>
<comment type="function">
    <text evidence="2">Involved in glucosinolate biosynthesis. Hydrolyzes the gamma-glutamyl peptide bond of several glutathione (GSH) conjugates to produce Cys-Gly conjugates related to glucosinolates. The gamma-Glu-Cys-Gly-GSH conjugates are the sulfur-donating molecule in glucosinolate biosynthesis. Can use the GSH conjugate of the camalexin intermediate IAN (GS-IAN) as substrate. Required for the biosynthesis of camalexin, a pathogen-inducible phytoalexin with antibacterial and antifungal properties.</text>
</comment>
<comment type="catalytic activity">
    <reaction evidence="2">
        <text>an S-[(1E)-1-(hydroxyimino)-omega-(methylsulfanyl)alkyl]-L-glutathione + H2O = an S-[(1E)-1-(hydroxyimino)-omega-(methylsulfanyl)alkyl]-L-cysteinylglycine + L-glutamate</text>
        <dbReference type="Rhea" id="RHEA:52756"/>
        <dbReference type="Rhea" id="RHEA-COMP:13138"/>
        <dbReference type="Rhea" id="RHEA-COMP:13355"/>
        <dbReference type="ChEBI" id="CHEBI:15377"/>
        <dbReference type="ChEBI" id="CHEBI:29985"/>
        <dbReference type="ChEBI" id="CHEBI:136061"/>
        <dbReference type="ChEBI" id="CHEBI:136825"/>
        <dbReference type="EC" id="3.4.19.16"/>
    </reaction>
</comment>
<comment type="catalytic activity">
    <reaction evidence="2">
        <text>(E)-1-(glutathione-S-yl)-2-(1H-indol-3-yl)acetohydroximate + H2O = (E)-1-(glycyl-L-cystein-S-yl)-2-(1H-indol-3-yl)acetohydroximate + L-glutamate</text>
        <dbReference type="Rhea" id="RHEA:52764"/>
        <dbReference type="ChEBI" id="CHEBI:15377"/>
        <dbReference type="ChEBI" id="CHEBI:29985"/>
        <dbReference type="ChEBI" id="CHEBI:136444"/>
        <dbReference type="ChEBI" id="CHEBI:136831"/>
        <dbReference type="EC" id="3.4.19.16"/>
    </reaction>
</comment>
<comment type="catalytic activity">
    <reaction evidence="2">
        <text>2-(glutathion-S-yl)-2-(1H-indol-3-yl)acetonitrile + H2O = 2-(glycyl-L-cystein-S-yl)-2-(1H-indol-3-yl)acetonitrile + L-glutamate</text>
        <dbReference type="Rhea" id="RHEA:52768"/>
        <dbReference type="ChEBI" id="CHEBI:15377"/>
        <dbReference type="ChEBI" id="CHEBI:29985"/>
        <dbReference type="ChEBI" id="CHEBI:64981"/>
        <dbReference type="ChEBI" id="CHEBI:136832"/>
        <dbReference type="EC" id="3.4.19.16"/>
    </reaction>
</comment>
<comment type="catalytic activity">
    <reaction evidence="2">
        <text>(Z)-1-(glutathione-S-yl)-2-phenylacetohydroximate + H2O = (Z)-1-(glycyl-L-cystein-S-yl)-2-phenylacetohydroximate + L-glutamate</text>
        <dbReference type="Rhea" id="RHEA:52760"/>
        <dbReference type="ChEBI" id="CHEBI:15377"/>
        <dbReference type="ChEBI" id="CHEBI:29985"/>
        <dbReference type="ChEBI" id="CHEBI:136447"/>
        <dbReference type="ChEBI" id="CHEBI:136830"/>
        <dbReference type="EC" id="3.4.19.16"/>
    </reaction>
</comment>
<comment type="pathway">
    <text evidence="4">Secondary metabolite biosynthesis.</text>
</comment>
<comment type="subcellular location">
    <subcellularLocation>
        <location evidence="2">Cytoplasm</location>
        <location evidence="2">Cytosol</location>
    </subcellularLocation>
</comment>
<comment type="similarity">
    <text evidence="4">Belongs to the peptidase C26 family.</text>
</comment>
<gene>
    <name evidence="3" type="primary">GGP3</name>
    <name evidence="5" type="ordered locus">At4g30550</name>
</gene>
<organism>
    <name type="scientific">Arabidopsis thaliana</name>
    <name type="common">Mouse-ear cress</name>
    <dbReference type="NCBI Taxonomy" id="3702"/>
    <lineage>
        <taxon>Eukaryota</taxon>
        <taxon>Viridiplantae</taxon>
        <taxon>Streptophyta</taxon>
        <taxon>Embryophyta</taxon>
        <taxon>Tracheophyta</taxon>
        <taxon>Spermatophyta</taxon>
        <taxon>Magnoliopsida</taxon>
        <taxon>eudicotyledons</taxon>
        <taxon>Gunneridae</taxon>
        <taxon>Pentapetalae</taxon>
        <taxon>rosids</taxon>
        <taxon>malvids</taxon>
        <taxon>Brassicales</taxon>
        <taxon>Brassicaceae</taxon>
        <taxon>Camelineae</taxon>
        <taxon>Arabidopsis</taxon>
    </lineage>
</organism>
<sequence>MVVIEQKKRFALFLATCDSEFVKKTYGGYFNVFVSTFGEEGEQWDLFRVIDGQFPDENDLDKYDGFVISGSPHDAFGDADWIVKLCEVCQKLDHMKKKVLGICFGHQIITRVKGGKIGRALKGADMGLRSITIAKDNEKLRGYFGDVEVPASLAIIKCHQDEVLELPESATLLASSEVCNVEMFSIGDHFFCIQGHPEYNKEILFEIVDRVLNMKLMEQEFADKAKSTMETAQPDRILWQKLCKNFLKG</sequence>
<name>GGP3_ARATH</name>
<reference key="1">
    <citation type="journal article" date="1999" name="Nature">
        <title>Sequence and analysis of chromosome 4 of the plant Arabidopsis thaliana.</title>
        <authorList>
            <person name="Mayer K.F.X."/>
            <person name="Schueller C."/>
            <person name="Wambutt R."/>
            <person name="Murphy G."/>
            <person name="Volckaert G."/>
            <person name="Pohl T."/>
            <person name="Duesterhoeft A."/>
            <person name="Stiekema W."/>
            <person name="Entian K.-D."/>
            <person name="Terryn N."/>
            <person name="Harris B."/>
            <person name="Ansorge W."/>
            <person name="Brandt P."/>
            <person name="Grivell L.A."/>
            <person name="Rieger M."/>
            <person name="Weichselgartner M."/>
            <person name="de Simone V."/>
            <person name="Obermaier B."/>
            <person name="Mache R."/>
            <person name="Mueller M."/>
            <person name="Kreis M."/>
            <person name="Delseny M."/>
            <person name="Puigdomenech P."/>
            <person name="Watson M."/>
            <person name="Schmidtheini T."/>
            <person name="Reichert B."/>
            <person name="Portetelle D."/>
            <person name="Perez-Alonso M."/>
            <person name="Boutry M."/>
            <person name="Bancroft I."/>
            <person name="Vos P."/>
            <person name="Hoheisel J."/>
            <person name="Zimmermann W."/>
            <person name="Wedler H."/>
            <person name="Ridley P."/>
            <person name="Langham S.-A."/>
            <person name="McCullagh B."/>
            <person name="Bilham L."/>
            <person name="Robben J."/>
            <person name="van der Schueren J."/>
            <person name="Grymonprez B."/>
            <person name="Chuang Y.-J."/>
            <person name="Vandenbussche F."/>
            <person name="Braeken M."/>
            <person name="Weltjens I."/>
            <person name="Voet M."/>
            <person name="Bastiaens I."/>
            <person name="Aert R."/>
            <person name="Defoor E."/>
            <person name="Weitzenegger T."/>
            <person name="Bothe G."/>
            <person name="Ramsperger U."/>
            <person name="Hilbert H."/>
            <person name="Braun M."/>
            <person name="Holzer E."/>
            <person name="Brandt A."/>
            <person name="Peters S."/>
            <person name="van Staveren M."/>
            <person name="Dirkse W."/>
            <person name="Mooijman P."/>
            <person name="Klein Lankhorst R."/>
            <person name="Rose M."/>
            <person name="Hauf J."/>
            <person name="Koetter P."/>
            <person name="Berneiser S."/>
            <person name="Hempel S."/>
            <person name="Feldpausch M."/>
            <person name="Lamberth S."/>
            <person name="Van den Daele H."/>
            <person name="De Keyser A."/>
            <person name="Buysshaert C."/>
            <person name="Gielen J."/>
            <person name="Villarroel R."/>
            <person name="De Clercq R."/>
            <person name="van Montagu M."/>
            <person name="Rogers J."/>
            <person name="Cronin A."/>
            <person name="Quail M.A."/>
            <person name="Bray-Allen S."/>
            <person name="Clark L."/>
            <person name="Doggett J."/>
            <person name="Hall S."/>
            <person name="Kay M."/>
            <person name="Lennard N."/>
            <person name="McLay K."/>
            <person name="Mayes R."/>
            <person name="Pettett A."/>
            <person name="Rajandream M.A."/>
            <person name="Lyne M."/>
            <person name="Benes V."/>
            <person name="Rechmann S."/>
            <person name="Borkova D."/>
            <person name="Bloecker H."/>
            <person name="Scharfe M."/>
            <person name="Grimm M."/>
            <person name="Loehnert T.-H."/>
            <person name="Dose S."/>
            <person name="de Haan M."/>
            <person name="Maarse A.C."/>
            <person name="Schaefer M."/>
            <person name="Mueller-Auer S."/>
            <person name="Gabel C."/>
            <person name="Fuchs M."/>
            <person name="Fartmann B."/>
            <person name="Granderath K."/>
            <person name="Dauner D."/>
            <person name="Herzl A."/>
            <person name="Neumann S."/>
            <person name="Argiriou A."/>
            <person name="Vitale D."/>
            <person name="Liguori R."/>
            <person name="Piravandi E."/>
            <person name="Massenet O."/>
            <person name="Quigley F."/>
            <person name="Clabauld G."/>
            <person name="Muendlein A."/>
            <person name="Felber R."/>
            <person name="Schnabl S."/>
            <person name="Hiller R."/>
            <person name="Schmidt W."/>
            <person name="Lecharny A."/>
            <person name="Aubourg S."/>
            <person name="Chefdor F."/>
            <person name="Cooke R."/>
            <person name="Berger C."/>
            <person name="Monfort A."/>
            <person name="Casacuberta E."/>
            <person name="Gibbons T."/>
            <person name="Weber N."/>
            <person name="Vandenbol M."/>
            <person name="Bargues M."/>
            <person name="Terol J."/>
            <person name="Torres A."/>
            <person name="Perez-Perez A."/>
            <person name="Purnelle B."/>
            <person name="Bent E."/>
            <person name="Johnson S."/>
            <person name="Tacon D."/>
            <person name="Jesse T."/>
            <person name="Heijnen L."/>
            <person name="Schwarz S."/>
            <person name="Scholler P."/>
            <person name="Heber S."/>
            <person name="Francs P."/>
            <person name="Bielke C."/>
            <person name="Frishman D."/>
            <person name="Haase D."/>
            <person name="Lemcke K."/>
            <person name="Mewes H.-W."/>
            <person name="Stocker S."/>
            <person name="Zaccaria P."/>
            <person name="Bevan M."/>
            <person name="Wilson R.K."/>
            <person name="de la Bastide M."/>
            <person name="Habermann K."/>
            <person name="Parnell L."/>
            <person name="Dedhia N."/>
            <person name="Gnoj L."/>
            <person name="Schutz K."/>
            <person name="Huang E."/>
            <person name="Spiegel L."/>
            <person name="Sekhon M."/>
            <person name="Murray J."/>
            <person name="Sheet P."/>
            <person name="Cordes M."/>
            <person name="Abu-Threideh J."/>
            <person name="Stoneking T."/>
            <person name="Kalicki J."/>
            <person name="Graves T."/>
            <person name="Harmon G."/>
            <person name="Edwards J."/>
            <person name="Latreille P."/>
            <person name="Courtney L."/>
            <person name="Cloud J."/>
            <person name="Abbott A."/>
            <person name="Scott K."/>
            <person name="Johnson D."/>
            <person name="Minx P."/>
            <person name="Bentley D."/>
            <person name="Fulton B."/>
            <person name="Miller N."/>
            <person name="Greco T."/>
            <person name="Kemp K."/>
            <person name="Kramer J."/>
            <person name="Fulton L."/>
            <person name="Mardis E."/>
            <person name="Dante M."/>
            <person name="Pepin K."/>
            <person name="Hillier L.W."/>
            <person name="Nelson J."/>
            <person name="Spieth J."/>
            <person name="Ryan E."/>
            <person name="Andrews S."/>
            <person name="Geisel C."/>
            <person name="Layman D."/>
            <person name="Du H."/>
            <person name="Ali J."/>
            <person name="Berghoff A."/>
            <person name="Jones K."/>
            <person name="Drone K."/>
            <person name="Cotton M."/>
            <person name="Joshu C."/>
            <person name="Antonoiu B."/>
            <person name="Zidanic M."/>
            <person name="Strong C."/>
            <person name="Sun H."/>
            <person name="Lamar B."/>
            <person name="Yordan C."/>
            <person name="Ma P."/>
            <person name="Zhong J."/>
            <person name="Preston R."/>
            <person name="Vil D."/>
            <person name="Shekher M."/>
            <person name="Matero A."/>
            <person name="Shah R."/>
            <person name="Swaby I.K."/>
            <person name="O'Shaughnessy A."/>
            <person name="Rodriguez M."/>
            <person name="Hoffman J."/>
            <person name="Till S."/>
            <person name="Granat S."/>
            <person name="Shohdy N."/>
            <person name="Hasegawa A."/>
            <person name="Hameed A."/>
            <person name="Lodhi M."/>
            <person name="Johnson A."/>
            <person name="Chen E."/>
            <person name="Marra M.A."/>
            <person name="Martienssen R."/>
            <person name="McCombie W.R."/>
        </authorList>
    </citation>
    <scope>NUCLEOTIDE SEQUENCE [LARGE SCALE GENOMIC DNA]</scope>
    <source>
        <strain>cv. Columbia</strain>
    </source>
</reference>
<reference key="2">
    <citation type="journal article" date="2017" name="Plant J.">
        <title>Araport11: a complete reannotation of the Arabidopsis thaliana reference genome.</title>
        <authorList>
            <person name="Cheng C.Y."/>
            <person name="Krishnakumar V."/>
            <person name="Chan A.P."/>
            <person name="Thibaud-Nissen F."/>
            <person name="Schobel S."/>
            <person name="Town C.D."/>
        </authorList>
    </citation>
    <scope>GENOME REANNOTATION</scope>
    <source>
        <strain>cv. Columbia</strain>
    </source>
</reference>
<reference key="3">
    <citation type="journal article" date="2003" name="Science">
        <title>Empirical analysis of transcriptional activity in the Arabidopsis genome.</title>
        <authorList>
            <person name="Yamada K."/>
            <person name="Lim J."/>
            <person name="Dale J.M."/>
            <person name="Chen H."/>
            <person name="Shinn P."/>
            <person name="Palm C.J."/>
            <person name="Southwick A.M."/>
            <person name="Wu H.C."/>
            <person name="Kim C.J."/>
            <person name="Nguyen M."/>
            <person name="Pham P.K."/>
            <person name="Cheuk R.F."/>
            <person name="Karlin-Newmann G."/>
            <person name="Liu S.X."/>
            <person name="Lam B."/>
            <person name="Sakano H."/>
            <person name="Wu T."/>
            <person name="Yu G."/>
            <person name="Miranda M."/>
            <person name="Quach H.L."/>
            <person name="Tripp M."/>
            <person name="Chang C.H."/>
            <person name="Lee J.M."/>
            <person name="Toriumi M.J."/>
            <person name="Chan M.M."/>
            <person name="Tang C.C."/>
            <person name="Onodera C.S."/>
            <person name="Deng J.M."/>
            <person name="Akiyama K."/>
            <person name="Ansari Y."/>
            <person name="Arakawa T."/>
            <person name="Banh J."/>
            <person name="Banno F."/>
            <person name="Bowser L."/>
            <person name="Brooks S.Y."/>
            <person name="Carninci P."/>
            <person name="Chao Q."/>
            <person name="Choy N."/>
            <person name="Enju A."/>
            <person name="Goldsmith A.D."/>
            <person name="Gurjal M."/>
            <person name="Hansen N.F."/>
            <person name="Hayashizaki Y."/>
            <person name="Johnson-Hopson C."/>
            <person name="Hsuan V.W."/>
            <person name="Iida K."/>
            <person name="Karnes M."/>
            <person name="Khan S."/>
            <person name="Koesema E."/>
            <person name="Ishida J."/>
            <person name="Jiang P.X."/>
            <person name="Jones T."/>
            <person name="Kawai J."/>
            <person name="Kamiya A."/>
            <person name="Meyers C."/>
            <person name="Nakajima M."/>
            <person name="Narusaka M."/>
            <person name="Seki M."/>
            <person name="Sakurai T."/>
            <person name="Satou M."/>
            <person name="Tamse R."/>
            <person name="Vaysberg M."/>
            <person name="Wallender E.K."/>
            <person name="Wong C."/>
            <person name="Yamamura Y."/>
            <person name="Yuan S."/>
            <person name="Shinozaki K."/>
            <person name="Davis R.W."/>
            <person name="Theologis A."/>
            <person name="Ecker J.R."/>
        </authorList>
    </citation>
    <scope>NUCLEOTIDE SEQUENCE [LARGE SCALE MRNA]</scope>
    <source>
        <strain>cv. Columbia</strain>
    </source>
</reference>
<reference key="4">
    <citation type="submission" date="2002-03" db="EMBL/GenBank/DDBJ databases">
        <title>Full-length cDNA from Arabidopsis thaliana.</title>
        <authorList>
            <person name="Brover V.V."/>
            <person name="Troukhan M.E."/>
            <person name="Alexandrov N.A."/>
            <person name="Lu Y.-P."/>
            <person name="Flavell R.B."/>
            <person name="Feldmann K.A."/>
        </authorList>
    </citation>
    <scope>NUCLEOTIDE SEQUENCE [LARGE SCALE MRNA]</scope>
</reference>
<reference key="5">
    <citation type="journal article" date="2011" name="Plant Cell">
        <title>Cytosolic gamma-glutamyl peptidases process glutathione conjugates in the biosynthesis of glucosinolates and camalexin in Arabidopsis.</title>
        <authorList>
            <person name="Geu-Flores F."/>
            <person name="Moeldrup M.E."/>
            <person name="Boettcher C."/>
            <person name="Olsen C.E."/>
            <person name="Scheel D."/>
            <person name="Halkier B.A."/>
        </authorList>
    </citation>
    <scope>FUNCTION</scope>
    <scope>CATALYTIC ACTIVITY</scope>
    <scope>SUBCELLULAR LOCATION</scope>
</reference>